<dbReference type="EC" id="7.1.1.-" evidence="1"/>
<dbReference type="EMBL" id="CP000803">
    <property type="protein sequence ID" value="ABU62406.1"/>
    <property type="molecule type" value="Genomic_DNA"/>
</dbReference>
<dbReference type="RefSeq" id="WP_003017378.1">
    <property type="nucleotide sequence ID" value="NC_009749.1"/>
</dbReference>
<dbReference type="SMR" id="A7NEK3"/>
<dbReference type="KEGG" id="fta:FTA_1931"/>
<dbReference type="HOGENOM" id="CLU_015134_0_1_6"/>
<dbReference type="GO" id="GO:0005886">
    <property type="term" value="C:plasma membrane"/>
    <property type="evidence" value="ECO:0007669"/>
    <property type="project" value="UniProtKB-SubCell"/>
</dbReference>
<dbReference type="GO" id="GO:0003954">
    <property type="term" value="F:NADH dehydrogenase activity"/>
    <property type="evidence" value="ECO:0007669"/>
    <property type="project" value="TreeGrafter"/>
</dbReference>
<dbReference type="GO" id="GO:0016655">
    <property type="term" value="F:oxidoreductase activity, acting on NAD(P)H, quinone or similar compound as acceptor"/>
    <property type="evidence" value="ECO:0007669"/>
    <property type="project" value="UniProtKB-UniRule"/>
</dbReference>
<dbReference type="GO" id="GO:0048038">
    <property type="term" value="F:quinone binding"/>
    <property type="evidence" value="ECO:0007669"/>
    <property type="project" value="UniProtKB-KW"/>
</dbReference>
<dbReference type="GO" id="GO:0009060">
    <property type="term" value="P:aerobic respiration"/>
    <property type="evidence" value="ECO:0007669"/>
    <property type="project" value="TreeGrafter"/>
</dbReference>
<dbReference type="HAMAP" id="MF_01350">
    <property type="entry name" value="NDH1_NuoH"/>
    <property type="match status" value="1"/>
</dbReference>
<dbReference type="InterPro" id="IPR001694">
    <property type="entry name" value="NADH_UbQ_OxRdtase_su1/FPO"/>
</dbReference>
<dbReference type="InterPro" id="IPR018086">
    <property type="entry name" value="NADH_UbQ_OxRdtase_su1_CS"/>
</dbReference>
<dbReference type="NCBIfam" id="NF004741">
    <property type="entry name" value="PRK06076.1-2"/>
    <property type="match status" value="1"/>
</dbReference>
<dbReference type="PANTHER" id="PTHR11432">
    <property type="entry name" value="NADH DEHYDROGENASE SUBUNIT 1"/>
    <property type="match status" value="1"/>
</dbReference>
<dbReference type="PANTHER" id="PTHR11432:SF3">
    <property type="entry name" value="NADH-UBIQUINONE OXIDOREDUCTASE CHAIN 1"/>
    <property type="match status" value="1"/>
</dbReference>
<dbReference type="Pfam" id="PF00146">
    <property type="entry name" value="NADHdh"/>
    <property type="match status" value="1"/>
</dbReference>
<dbReference type="PROSITE" id="PS00667">
    <property type="entry name" value="COMPLEX1_ND1_1"/>
    <property type="match status" value="1"/>
</dbReference>
<dbReference type="PROSITE" id="PS00668">
    <property type="entry name" value="COMPLEX1_ND1_2"/>
    <property type="match status" value="1"/>
</dbReference>
<organism>
    <name type="scientific">Francisella tularensis subsp. holarctica (strain FTNF002-00 / FTA)</name>
    <dbReference type="NCBI Taxonomy" id="458234"/>
    <lineage>
        <taxon>Bacteria</taxon>
        <taxon>Pseudomonadati</taxon>
        <taxon>Pseudomonadota</taxon>
        <taxon>Gammaproteobacteria</taxon>
        <taxon>Thiotrichales</taxon>
        <taxon>Francisellaceae</taxon>
        <taxon>Francisella</taxon>
    </lineage>
</organism>
<protein>
    <recommendedName>
        <fullName evidence="1">NADH-quinone oxidoreductase subunit H</fullName>
        <ecNumber evidence="1">7.1.1.-</ecNumber>
    </recommendedName>
    <alternativeName>
        <fullName evidence="1">NADH dehydrogenase I subunit H</fullName>
    </alternativeName>
    <alternativeName>
        <fullName evidence="1">NDH-1 subunit H</fullName>
    </alternativeName>
</protein>
<sequence length="336" mass="37642">MLGYILWTSLYVLLIVIPLILVVAYYTYAERKVIGYMQDRIGPNRVGSFGLLQPIFDALKLFLKEIIVPTNSNRYLFFIAPILAFAPAYAAWAVIPFSKGVVLSDMNLGLLYILAMTSFSIYGIVIAGWASNSKYSLFGALRAGAQVISYELAMGFAIVGVVIAAGSMGITGIIEAQSGGIWHWYFIPLFPLFIVYFIAGIAETNRAPFDVVEGESEIVAGHHIEYTGSRFALFFLAEYANMILISILTSIMFLGGWNSPFQATALESIFGFVPGVVWLFAKTGIFMFMFLWVRATYPRYRYDQIMRLGWKIFIPLTFVWVVIVACMVRLGVGPWW</sequence>
<gene>
    <name evidence="1" type="primary">nuoH</name>
    <name type="ordered locus">FTA_1931</name>
</gene>
<name>NUOH_FRATF</name>
<reference key="1">
    <citation type="journal article" date="2009" name="PLoS ONE">
        <title>Complete genome sequence of Francisella tularensis subspecies holarctica FTNF002-00.</title>
        <authorList>
            <person name="Barabote R.D."/>
            <person name="Xie G."/>
            <person name="Brettin T.S."/>
            <person name="Hinrichs S.H."/>
            <person name="Fey P.D."/>
            <person name="Jay J.J."/>
            <person name="Engle J.L."/>
            <person name="Godbole S.D."/>
            <person name="Noronha J.M."/>
            <person name="Scheuermann R.H."/>
            <person name="Zhou L.W."/>
            <person name="Lion C."/>
            <person name="Dempsey M.P."/>
        </authorList>
    </citation>
    <scope>NUCLEOTIDE SEQUENCE [LARGE SCALE GENOMIC DNA]</scope>
    <source>
        <strain>FTNF002-00 / FTA</strain>
    </source>
</reference>
<accession>A7NEK3</accession>
<feature type="chain" id="PRO_1000067745" description="NADH-quinone oxidoreductase subunit H">
    <location>
        <begin position="1"/>
        <end position="336"/>
    </location>
</feature>
<feature type="transmembrane region" description="Helical" evidence="1">
    <location>
        <begin position="4"/>
        <end position="24"/>
    </location>
</feature>
<feature type="transmembrane region" description="Helical" evidence="1">
    <location>
        <begin position="75"/>
        <end position="95"/>
    </location>
</feature>
<feature type="transmembrane region" description="Helical" evidence="1">
    <location>
        <begin position="108"/>
        <end position="128"/>
    </location>
</feature>
<feature type="transmembrane region" description="Helical" evidence="1">
    <location>
        <begin position="154"/>
        <end position="174"/>
    </location>
</feature>
<feature type="transmembrane region" description="Helical" evidence="1">
    <location>
        <begin position="181"/>
        <end position="201"/>
    </location>
</feature>
<feature type="transmembrane region" description="Helical" evidence="1">
    <location>
        <begin position="233"/>
        <end position="253"/>
    </location>
</feature>
<feature type="transmembrane region" description="Helical" evidence="1">
    <location>
        <begin position="272"/>
        <end position="292"/>
    </location>
</feature>
<feature type="transmembrane region" description="Helical" evidence="1">
    <location>
        <begin position="308"/>
        <end position="328"/>
    </location>
</feature>
<comment type="function">
    <text evidence="1">NDH-1 shuttles electrons from NADH, via FMN and iron-sulfur (Fe-S) centers, to quinones in the respiratory chain. The immediate electron acceptor for the enzyme in this species is believed to be ubiquinone. Couples the redox reaction to proton translocation (for every two electrons transferred, four hydrogen ions are translocated across the cytoplasmic membrane), and thus conserves the redox energy in a proton gradient. This subunit may bind ubiquinone.</text>
</comment>
<comment type="catalytic activity">
    <reaction evidence="1">
        <text>a quinone + NADH + 5 H(+)(in) = a quinol + NAD(+) + 4 H(+)(out)</text>
        <dbReference type="Rhea" id="RHEA:57888"/>
        <dbReference type="ChEBI" id="CHEBI:15378"/>
        <dbReference type="ChEBI" id="CHEBI:24646"/>
        <dbReference type="ChEBI" id="CHEBI:57540"/>
        <dbReference type="ChEBI" id="CHEBI:57945"/>
        <dbReference type="ChEBI" id="CHEBI:132124"/>
    </reaction>
</comment>
<comment type="subunit">
    <text evidence="1">NDH-1 is composed of 14 different subunits. Subunits NuoA, H, J, K, L, M, N constitute the membrane sector of the complex.</text>
</comment>
<comment type="subcellular location">
    <subcellularLocation>
        <location evidence="1">Cell inner membrane</location>
        <topology evidence="1">Multi-pass membrane protein</topology>
    </subcellularLocation>
</comment>
<comment type="similarity">
    <text evidence="1">Belongs to the complex I subunit 1 family.</text>
</comment>
<evidence type="ECO:0000255" key="1">
    <source>
        <dbReference type="HAMAP-Rule" id="MF_01350"/>
    </source>
</evidence>
<keyword id="KW-0997">Cell inner membrane</keyword>
<keyword id="KW-1003">Cell membrane</keyword>
<keyword id="KW-0472">Membrane</keyword>
<keyword id="KW-0520">NAD</keyword>
<keyword id="KW-0874">Quinone</keyword>
<keyword id="KW-1278">Translocase</keyword>
<keyword id="KW-0812">Transmembrane</keyword>
<keyword id="KW-1133">Transmembrane helix</keyword>
<keyword id="KW-0830">Ubiquinone</keyword>
<proteinExistence type="inferred from homology"/>